<comment type="function">
    <text evidence="1">May be involved in telomere capping.</text>
</comment>
<comment type="subcellular location">
    <subcellularLocation>
        <location evidence="3">Membrane</location>
        <topology evidence="3">Single-pass type I membrane protein</topology>
    </subcellularLocation>
</comment>
<comment type="similarity">
    <text evidence="3">Belongs to the MTC6 family.</text>
</comment>
<accession>C7GJY7</accession>
<dbReference type="EMBL" id="ACFL01000017">
    <property type="protein sequence ID" value="EEU08901.1"/>
    <property type="molecule type" value="Genomic_DNA"/>
</dbReference>
<dbReference type="GlyCosmos" id="C7GJY7">
    <property type="glycosylation" value="13 sites, No reported glycans"/>
</dbReference>
<dbReference type="OrthoDB" id="38991at4893"/>
<dbReference type="Proteomes" id="UP000008073">
    <property type="component" value="Unassembled WGS sequence"/>
</dbReference>
<dbReference type="GO" id="GO:0016020">
    <property type="term" value="C:membrane"/>
    <property type="evidence" value="ECO:0007669"/>
    <property type="project" value="UniProtKB-SubCell"/>
</dbReference>
<dbReference type="InterPro" id="IPR051008">
    <property type="entry name" value="Telomere_Capping_Maintenance"/>
</dbReference>
<dbReference type="PANTHER" id="PTHR35518:SF2">
    <property type="entry name" value="MAINTENANCE OF TELOMERE CAPPING PROTEIN 6"/>
    <property type="match status" value="1"/>
</dbReference>
<dbReference type="PANTHER" id="PTHR35518">
    <property type="entry name" value="MAINTENANCE OF TELOMOERE CAPPING"/>
    <property type="match status" value="1"/>
</dbReference>
<dbReference type="Pfam" id="PF25506">
    <property type="entry name" value="TIM-barrel_MTC6"/>
    <property type="match status" value="1"/>
</dbReference>
<organism>
    <name type="scientific">Saccharomyces cerevisiae (strain JAY291)</name>
    <name type="common">Baker's yeast</name>
    <dbReference type="NCBI Taxonomy" id="574961"/>
    <lineage>
        <taxon>Eukaryota</taxon>
        <taxon>Fungi</taxon>
        <taxon>Dikarya</taxon>
        <taxon>Ascomycota</taxon>
        <taxon>Saccharomycotina</taxon>
        <taxon>Saccharomycetes</taxon>
        <taxon>Saccharomycetales</taxon>
        <taxon>Saccharomycetaceae</taxon>
        <taxon>Saccharomyces</taxon>
    </lineage>
</organism>
<evidence type="ECO:0000250" key="1"/>
<evidence type="ECO:0000255" key="2"/>
<evidence type="ECO:0000305" key="3"/>
<name>MTC6_YEAS2</name>
<protein>
    <recommendedName>
        <fullName>Maintenance of telomere capping protein 6</fullName>
    </recommendedName>
</protein>
<gene>
    <name type="primary">MTC6</name>
    <name type="ORF">C1Q_00512</name>
</gene>
<sequence>MWILIYLFIIWSSLRTWVTAVDSTTTVGDDLNETVSASVWPTMSPQMTVAFRSQRDVMGNLTIDQLPYVGLNLRRVLLNNETSMVNEGNNTRLLTLFKSMLSSEANAFVLDLEQYNNDLRVVDTTLLFSDVLIALQSFIFSTQNNLYANIIVLLLNISAPELDSTEYRHQNQTLNTTYILDKNLGNGFIYKPTDLQSDRAKNNTWNIYGKSSIDGWPTLGSVLYEQKKRLVIGELTDFFNETTAPYIFPHDVFHYEQGNSTLDCPSTVEGLTDLSSIHWRFLDSLFNSVDIKEYISCGLSPIISNSAYVNNVTQLADIIHEGSVWSWDSDQPSVTQSTSKSGSSSGTLEAYNCVLLYYFANNETVTWRVGNCYNSNIGLCRYENMAFRWLVRSNKATYFDFDSYQGSKCPDQYSFNIPRSPLEQRSFIAYMRNSSFSDTQIWIDLNSISVSNCWVSGGPYASCPYEKVISKRNFVTMMVPASVCSFALLCIVVYLSVLRVPIYDNRKNWRRVINKISKSELEGVPS</sequence>
<reference key="1">
    <citation type="journal article" date="2009" name="Genome Res.">
        <title>Genome structure of a Saccharomyces cerevisiae strain widely used in bioethanol production.</title>
        <authorList>
            <person name="Argueso J.L."/>
            <person name="Carazzolle M.F."/>
            <person name="Mieczkowski P.A."/>
            <person name="Duarte F.M."/>
            <person name="Netto O.V.C."/>
            <person name="Missawa S.K."/>
            <person name="Galzerani F."/>
            <person name="Costa G.G.L."/>
            <person name="Vidal R.O."/>
            <person name="Noronha M.F."/>
            <person name="Dominska M."/>
            <person name="Andrietta M.G.S."/>
            <person name="Andrietta S.R."/>
            <person name="Cunha A.F."/>
            <person name="Gomes L.H."/>
            <person name="Tavares F.C.A."/>
            <person name="Alcarde A.R."/>
            <person name="Dietrich F.S."/>
            <person name="McCusker J.H."/>
            <person name="Petes T.D."/>
            <person name="Pereira G.A.G."/>
        </authorList>
    </citation>
    <scope>NUCLEOTIDE SEQUENCE [LARGE SCALE GENOMIC DNA]</scope>
    <source>
        <strain>JAY291</strain>
    </source>
</reference>
<feature type="signal peptide" evidence="2">
    <location>
        <begin position="1"/>
        <end position="20"/>
    </location>
</feature>
<feature type="chain" id="PRO_0000407786" description="Maintenance of telomere capping protein 6">
    <location>
        <begin position="21"/>
        <end position="526"/>
    </location>
</feature>
<feature type="topological domain" description="Extracellular" evidence="2">
    <location>
        <begin position="21"/>
        <end position="477"/>
    </location>
</feature>
<feature type="transmembrane region" description="Helical" evidence="2">
    <location>
        <begin position="478"/>
        <end position="498"/>
    </location>
</feature>
<feature type="topological domain" description="Cytoplasmic" evidence="2">
    <location>
        <begin position="499"/>
        <end position="526"/>
    </location>
</feature>
<feature type="glycosylation site" description="N-linked (GlcNAc...) asparagine" evidence="2">
    <location>
        <position position="32"/>
    </location>
</feature>
<feature type="glycosylation site" description="N-linked (GlcNAc...) asparagine" evidence="2">
    <location>
        <position position="60"/>
    </location>
</feature>
<feature type="glycosylation site" description="N-linked (GlcNAc...) asparagine" evidence="2">
    <location>
        <position position="80"/>
    </location>
</feature>
<feature type="glycosylation site" description="N-linked (GlcNAc...) asparagine" evidence="2">
    <location>
        <position position="89"/>
    </location>
</feature>
<feature type="glycosylation site" description="N-linked (GlcNAc...) asparagine" evidence="2">
    <location>
        <position position="156"/>
    </location>
</feature>
<feature type="glycosylation site" description="N-linked (GlcNAc...) asparagine" evidence="2">
    <location>
        <position position="171"/>
    </location>
</feature>
<feature type="glycosylation site" description="N-linked (GlcNAc...) asparagine" evidence="2">
    <location>
        <position position="175"/>
    </location>
</feature>
<feature type="glycosylation site" description="N-linked (GlcNAc...) asparagine" evidence="2">
    <location>
        <position position="202"/>
    </location>
</feature>
<feature type="glycosylation site" description="N-linked (GlcNAc...) asparagine" evidence="2">
    <location>
        <position position="240"/>
    </location>
</feature>
<feature type="glycosylation site" description="N-linked (GlcNAc...) asparagine" evidence="2">
    <location>
        <position position="259"/>
    </location>
</feature>
<feature type="glycosylation site" description="N-linked (GlcNAc...) asparagine" evidence="2">
    <location>
        <position position="311"/>
    </location>
</feature>
<feature type="glycosylation site" description="N-linked (GlcNAc...) asparagine" evidence="2">
    <location>
        <position position="362"/>
    </location>
</feature>
<feature type="glycosylation site" description="N-linked (GlcNAc...) asparagine" evidence="2">
    <location>
        <position position="433"/>
    </location>
</feature>
<proteinExistence type="inferred from homology"/>
<keyword id="KW-0325">Glycoprotein</keyword>
<keyword id="KW-0472">Membrane</keyword>
<keyword id="KW-0732">Signal</keyword>
<keyword id="KW-0812">Transmembrane</keyword>
<keyword id="KW-1133">Transmembrane helix</keyword>